<accession>Q661B8</accession>
<gene>
    <name evidence="1" type="primary">rpoA</name>
    <name type="ordered locus">BG0514</name>
</gene>
<organism>
    <name type="scientific">Borrelia garinii subsp. bavariensis (strain ATCC BAA-2496 / DSM 23469 / PBi)</name>
    <name type="common">Borreliella bavariensis</name>
    <dbReference type="NCBI Taxonomy" id="290434"/>
    <lineage>
        <taxon>Bacteria</taxon>
        <taxon>Pseudomonadati</taxon>
        <taxon>Spirochaetota</taxon>
        <taxon>Spirochaetia</taxon>
        <taxon>Spirochaetales</taxon>
        <taxon>Borreliaceae</taxon>
        <taxon>Borreliella</taxon>
    </lineage>
</organism>
<name>RPOA_BORGP</name>
<sequence length="344" mass="38716">MPVEKFLKDFTIPEKIEFLKSQDDGSYGKFTIYPFERGFGVTIGNTLRRVLLSSIEGYAITAMRIQSNNKDSSSKVVSSEFDLIPGVSEDTLEVIANIKNIHLKLGEGEQRKIISFSVSGKDTKVLKASHFERDGVEVFNRDLVIATLSQDVNLDLEFQINYGRGYVSSEQNSKYLEEVNVIALDSIFSPIEKVSYSVEDTRVGQRSDYDKLVMEIWTTGVISAKDAIKKAASIIREFLFPLIDFEDNINTSFEKSKSESSNLLDMSIEKLDLSVRSLNCLAKENVRTLGELISKNAEELSKARNFGKKSLEEIIEKLSSYQLFLGMSKEDALFVLSKNVKISE</sequence>
<proteinExistence type="inferred from homology"/>
<feature type="chain" id="PRO_0000175272" description="DNA-directed RNA polymerase subunit alpha">
    <location>
        <begin position="1"/>
        <end position="344"/>
    </location>
</feature>
<feature type="region of interest" description="Alpha N-terminal domain (alpha-NTD)" evidence="1">
    <location>
        <begin position="1"/>
        <end position="246"/>
    </location>
</feature>
<feature type="region of interest" description="Alpha C-terminal domain (alpha-CTD)" evidence="1">
    <location>
        <begin position="259"/>
        <end position="344"/>
    </location>
</feature>
<reference key="1">
    <citation type="journal article" date="2004" name="Nucleic Acids Res.">
        <title>Comparative analysis of the Borrelia garinii genome.</title>
        <authorList>
            <person name="Gloeckner G."/>
            <person name="Lehmann R."/>
            <person name="Romualdi A."/>
            <person name="Pradella S."/>
            <person name="Schulte-Spechtel U."/>
            <person name="Schilhabel M."/>
            <person name="Wilske B."/>
            <person name="Suehnel J."/>
            <person name="Platzer M."/>
        </authorList>
    </citation>
    <scope>NUCLEOTIDE SEQUENCE [LARGE SCALE GENOMIC DNA]</scope>
    <source>
        <strain>ATCC BAA-2496 / DSM 23469 / PBi</strain>
    </source>
</reference>
<protein>
    <recommendedName>
        <fullName evidence="1">DNA-directed RNA polymerase subunit alpha</fullName>
        <shortName evidence="1">RNAP subunit alpha</shortName>
        <ecNumber evidence="1">2.7.7.6</ecNumber>
    </recommendedName>
    <alternativeName>
        <fullName evidence="1">RNA polymerase subunit alpha</fullName>
    </alternativeName>
    <alternativeName>
        <fullName evidence="1">Transcriptase subunit alpha</fullName>
    </alternativeName>
</protein>
<comment type="function">
    <text evidence="1">DNA-dependent RNA polymerase catalyzes the transcription of DNA into RNA using the four ribonucleoside triphosphates as substrates.</text>
</comment>
<comment type="catalytic activity">
    <reaction evidence="1">
        <text>RNA(n) + a ribonucleoside 5'-triphosphate = RNA(n+1) + diphosphate</text>
        <dbReference type="Rhea" id="RHEA:21248"/>
        <dbReference type="Rhea" id="RHEA-COMP:14527"/>
        <dbReference type="Rhea" id="RHEA-COMP:17342"/>
        <dbReference type="ChEBI" id="CHEBI:33019"/>
        <dbReference type="ChEBI" id="CHEBI:61557"/>
        <dbReference type="ChEBI" id="CHEBI:140395"/>
        <dbReference type="EC" id="2.7.7.6"/>
    </reaction>
</comment>
<comment type="subunit">
    <text evidence="1">Homodimer. The RNAP catalytic core consists of 2 alpha, 1 beta, 1 beta' and 1 omega subunit. When a sigma factor is associated with the core the holoenzyme is formed, which can initiate transcription.</text>
</comment>
<comment type="domain">
    <text evidence="1">The N-terminal domain is essential for RNAP assembly and basal transcription, whereas the C-terminal domain is involved in interaction with transcriptional regulators and with upstream promoter elements.</text>
</comment>
<comment type="similarity">
    <text evidence="1">Belongs to the RNA polymerase alpha chain family.</text>
</comment>
<dbReference type="EC" id="2.7.7.6" evidence="1"/>
<dbReference type="EMBL" id="CP000013">
    <property type="protein sequence ID" value="AAU07353.1"/>
    <property type="molecule type" value="Genomic_DNA"/>
</dbReference>
<dbReference type="RefSeq" id="WP_011193815.1">
    <property type="nucleotide sequence ID" value="NZ_CP028872.1"/>
</dbReference>
<dbReference type="SMR" id="Q661B8"/>
<dbReference type="GeneID" id="45161296"/>
<dbReference type="KEGG" id="bga:BG0514"/>
<dbReference type="eggNOG" id="COG0202">
    <property type="taxonomic scope" value="Bacteria"/>
</dbReference>
<dbReference type="HOGENOM" id="CLU_053084_0_1_12"/>
<dbReference type="OrthoDB" id="9805706at2"/>
<dbReference type="Proteomes" id="UP000002276">
    <property type="component" value="Chromosome"/>
</dbReference>
<dbReference type="GO" id="GO:0005737">
    <property type="term" value="C:cytoplasm"/>
    <property type="evidence" value="ECO:0007669"/>
    <property type="project" value="UniProtKB-ARBA"/>
</dbReference>
<dbReference type="GO" id="GO:0000428">
    <property type="term" value="C:DNA-directed RNA polymerase complex"/>
    <property type="evidence" value="ECO:0007669"/>
    <property type="project" value="UniProtKB-KW"/>
</dbReference>
<dbReference type="GO" id="GO:0003677">
    <property type="term" value="F:DNA binding"/>
    <property type="evidence" value="ECO:0007669"/>
    <property type="project" value="UniProtKB-UniRule"/>
</dbReference>
<dbReference type="GO" id="GO:0003899">
    <property type="term" value="F:DNA-directed RNA polymerase activity"/>
    <property type="evidence" value="ECO:0007669"/>
    <property type="project" value="UniProtKB-UniRule"/>
</dbReference>
<dbReference type="GO" id="GO:0046983">
    <property type="term" value="F:protein dimerization activity"/>
    <property type="evidence" value="ECO:0007669"/>
    <property type="project" value="InterPro"/>
</dbReference>
<dbReference type="GO" id="GO:0006351">
    <property type="term" value="P:DNA-templated transcription"/>
    <property type="evidence" value="ECO:0007669"/>
    <property type="project" value="UniProtKB-UniRule"/>
</dbReference>
<dbReference type="CDD" id="cd06928">
    <property type="entry name" value="RNAP_alpha_NTD"/>
    <property type="match status" value="1"/>
</dbReference>
<dbReference type="Gene3D" id="1.10.150.20">
    <property type="entry name" value="5' to 3' exonuclease, C-terminal subdomain"/>
    <property type="match status" value="1"/>
</dbReference>
<dbReference type="Gene3D" id="2.170.120.12">
    <property type="entry name" value="DNA-directed RNA polymerase, insert domain"/>
    <property type="match status" value="1"/>
</dbReference>
<dbReference type="Gene3D" id="3.30.1360.10">
    <property type="entry name" value="RNA polymerase, RBP11-like subunit"/>
    <property type="match status" value="1"/>
</dbReference>
<dbReference type="HAMAP" id="MF_00059">
    <property type="entry name" value="RNApol_bact_RpoA"/>
    <property type="match status" value="1"/>
</dbReference>
<dbReference type="InterPro" id="IPR011262">
    <property type="entry name" value="DNA-dir_RNA_pol_insert"/>
</dbReference>
<dbReference type="InterPro" id="IPR011263">
    <property type="entry name" value="DNA-dir_RNA_pol_RpoA/D/Rpb3"/>
</dbReference>
<dbReference type="InterPro" id="IPR011773">
    <property type="entry name" value="DNA-dir_RpoA"/>
</dbReference>
<dbReference type="InterPro" id="IPR036603">
    <property type="entry name" value="RBP11-like"/>
</dbReference>
<dbReference type="InterPro" id="IPR011260">
    <property type="entry name" value="RNAP_asu_C"/>
</dbReference>
<dbReference type="InterPro" id="IPR036643">
    <property type="entry name" value="RNApol_insert_sf"/>
</dbReference>
<dbReference type="NCBIfam" id="NF003513">
    <property type="entry name" value="PRK05182.1-2"/>
    <property type="match status" value="1"/>
</dbReference>
<dbReference type="NCBIfam" id="NF003519">
    <property type="entry name" value="PRK05182.2-5"/>
    <property type="match status" value="1"/>
</dbReference>
<dbReference type="NCBIfam" id="TIGR02027">
    <property type="entry name" value="rpoA"/>
    <property type="match status" value="1"/>
</dbReference>
<dbReference type="Pfam" id="PF01000">
    <property type="entry name" value="RNA_pol_A_bac"/>
    <property type="match status" value="1"/>
</dbReference>
<dbReference type="Pfam" id="PF03118">
    <property type="entry name" value="RNA_pol_A_CTD"/>
    <property type="match status" value="1"/>
</dbReference>
<dbReference type="Pfam" id="PF01193">
    <property type="entry name" value="RNA_pol_L"/>
    <property type="match status" value="1"/>
</dbReference>
<dbReference type="SMART" id="SM00662">
    <property type="entry name" value="RPOLD"/>
    <property type="match status" value="1"/>
</dbReference>
<dbReference type="SUPFAM" id="SSF47789">
    <property type="entry name" value="C-terminal domain of RNA polymerase alpha subunit"/>
    <property type="match status" value="1"/>
</dbReference>
<dbReference type="SUPFAM" id="SSF56553">
    <property type="entry name" value="Insert subdomain of RNA polymerase alpha subunit"/>
    <property type="match status" value="1"/>
</dbReference>
<dbReference type="SUPFAM" id="SSF55257">
    <property type="entry name" value="RBP11-like subunits of RNA polymerase"/>
    <property type="match status" value="1"/>
</dbReference>
<evidence type="ECO:0000255" key="1">
    <source>
        <dbReference type="HAMAP-Rule" id="MF_00059"/>
    </source>
</evidence>
<keyword id="KW-0240">DNA-directed RNA polymerase</keyword>
<keyword id="KW-0548">Nucleotidyltransferase</keyword>
<keyword id="KW-0804">Transcription</keyword>
<keyword id="KW-0808">Transferase</keyword>